<organism>
    <name type="scientific">Pectobacterium atrosepticum (strain SCRI 1043 / ATCC BAA-672)</name>
    <name type="common">Erwinia carotovora subsp. atroseptica</name>
    <dbReference type="NCBI Taxonomy" id="218491"/>
    <lineage>
        <taxon>Bacteria</taxon>
        <taxon>Pseudomonadati</taxon>
        <taxon>Pseudomonadota</taxon>
        <taxon>Gammaproteobacteria</taxon>
        <taxon>Enterobacterales</taxon>
        <taxon>Pectobacteriaceae</taxon>
        <taxon>Pectobacterium</taxon>
    </lineage>
</organism>
<sequence length="229" mass="25875">MIKAIVTDIEGTTSDIRFVHSVLFPYARERLADTVRQHDSDPEIAQVLNALRQELAQPDADSDTLIAALNQFMDEDRKSTSLKLLQGIIWRAGYRNGDFQGHLYPEVAAQLAAWQQQGLHLYVYSSGSVEAQRLLFGYSNAGDLRPLFSDYFDTRVGAKRETDSYRTIAQAIGLPAEQLLFLSDIRQELDAAQEAGWHTCQLIRDDADSVSRHRQAARFDQIDLPEYAQ</sequence>
<comment type="function">
    <text evidence="1">Bifunctional enzyme that catalyzes the enolization of 2,3-diketo-5-methylthiopentyl-1-phosphate (DK-MTP-1-P) into the intermediate 2-hydroxy-3-keto-5-methylthiopentenyl-1-phosphate (HK-MTPenyl-1-P), which is then dephosphorylated to form the acireductone 1,2-dihydroxy-3-keto-5-methylthiopentene (DHK-MTPene).</text>
</comment>
<comment type="catalytic activity">
    <reaction evidence="1">
        <text>5-methylsulfanyl-2,3-dioxopentyl phosphate + H2O = 1,2-dihydroxy-5-(methylsulfanyl)pent-1-en-3-one + phosphate</text>
        <dbReference type="Rhea" id="RHEA:21700"/>
        <dbReference type="ChEBI" id="CHEBI:15377"/>
        <dbReference type="ChEBI" id="CHEBI:43474"/>
        <dbReference type="ChEBI" id="CHEBI:49252"/>
        <dbReference type="ChEBI" id="CHEBI:58828"/>
        <dbReference type="EC" id="3.1.3.77"/>
    </reaction>
</comment>
<comment type="cofactor">
    <cofactor evidence="1">
        <name>Mg(2+)</name>
        <dbReference type="ChEBI" id="CHEBI:18420"/>
    </cofactor>
    <text evidence="1">Binds 1 Mg(2+) ion per subunit.</text>
</comment>
<comment type="pathway">
    <text evidence="1">Amino-acid biosynthesis; L-methionine biosynthesis via salvage pathway; L-methionine from S-methyl-5-thio-alpha-D-ribose 1-phosphate: step 3/6.</text>
</comment>
<comment type="pathway">
    <text evidence="1">Amino-acid biosynthesis; L-methionine biosynthesis via salvage pathway; L-methionine from S-methyl-5-thio-alpha-D-ribose 1-phosphate: step 4/6.</text>
</comment>
<comment type="subunit">
    <text evidence="1">Monomer.</text>
</comment>
<comment type="similarity">
    <text evidence="1">Belongs to the HAD-like hydrolase superfamily. MasA/MtnC family.</text>
</comment>
<gene>
    <name evidence="1" type="primary">mtnC</name>
    <name type="ordered locus">ECA3486</name>
</gene>
<evidence type="ECO:0000255" key="1">
    <source>
        <dbReference type="HAMAP-Rule" id="MF_01681"/>
    </source>
</evidence>
<dbReference type="EC" id="3.1.3.77" evidence="1"/>
<dbReference type="EMBL" id="BX950851">
    <property type="protein sequence ID" value="CAG76384.1"/>
    <property type="molecule type" value="Genomic_DNA"/>
</dbReference>
<dbReference type="RefSeq" id="WP_011094991.1">
    <property type="nucleotide sequence ID" value="NC_004547.2"/>
</dbReference>
<dbReference type="SMR" id="Q6D1G2"/>
<dbReference type="STRING" id="218491.ECA3486"/>
<dbReference type="GeneID" id="57210154"/>
<dbReference type="KEGG" id="eca:ECA3486"/>
<dbReference type="eggNOG" id="COG4229">
    <property type="taxonomic scope" value="Bacteria"/>
</dbReference>
<dbReference type="HOGENOM" id="CLU_023273_0_0_6"/>
<dbReference type="OrthoDB" id="9797416at2"/>
<dbReference type="UniPathway" id="UPA00904">
    <property type="reaction ID" value="UER00876"/>
</dbReference>
<dbReference type="UniPathway" id="UPA00904">
    <property type="reaction ID" value="UER00877"/>
</dbReference>
<dbReference type="Proteomes" id="UP000007966">
    <property type="component" value="Chromosome"/>
</dbReference>
<dbReference type="GO" id="GO:0043715">
    <property type="term" value="F:2,3-diketo-5-methylthiopentyl-1-phosphate enolase activity"/>
    <property type="evidence" value="ECO:0007669"/>
    <property type="project" value="UniProtKB-UniRule"/>
</dbReference>
<dbReference type="GO" id="GO:0043716">
    <property type="term" value="F:2-hydroxy-3-keto-5-methylthiopentenyl-1-phosphate phosphatase activity"/>
    <property type="evidence" value="ECO:0007669"/>
    <property type="project" value="UniProtKB-UniRule"/>
</dbReference>
<dbReference type="GO" id="GO:0043874">
    <property type="term" value="F:acireductone synthase activity"/>
    <property type="evidence" value="ECO:0007669"/>
    <property type="project" value="UniProtKB-EC"/>
</dbReference>
<dbReference type="GO" id="GO:0000287">
    <property type="term" value="F:magnesium ion binding"/>
    <property type="evidence" value="ECO:0007669"/>
    <property type="project" value="UniProtKB-UniRule"/>
</dbReference>
<dbReference type="GO" id="GO:0019509">
    <property type="term" value="P:L-methionine salvage from methylthioadenosine"/>
    <property type="evidence" value="ECO:0007669"/>
    <property type="project" value="UniProtKB-UniRule"/>
</dbReference>
<dbReference type="CDD" id="cd01629">
    <property type="entry name" value="HAD_EP"/>
    <property type="match status" value="1"/>
</dbReference>
<dbReference type="Gene3D" id="1.10.720.60">
    <property type="match status" value="1"/>
</dbReference>
<dbReference type="Gene3D" id="3.40.50.1000">
    <property type="entry name" value="HAD superfamily/HAD-like"/>
    <property type="match status" value="1"/>
</dbReference>
<dbReference type="HAMAP" id="MF_01681">
    <property type="entry name" value="Salvage_MtnC"/>
    <property type="match status" value="1"/>
</dbReference>
<dbReference type="InterPro" id="IPR023943">
    <property type="entry name" value="Enolase-ppase_E1"/>
</dbReference>
<dbReference type="InterPro" id="IPR036412">
    <property type="entry name" value="HAD-like_sf"/>
</dbReference>
<dbReference type="InterPro" id="IPR006439">
    <property type="entry name" value="HAD-SF_hydro_IA"/>
</dbReference>
<dbReference type="InterPro" id="IPR023214">
    <property type="entry name" value="HAD_sf"/>
</dbReference>
<dbReference type="NCBIfam" id="TIGR01691">
    <property type="entry name" value="enolase-ppase"/>
    <property type="match status" value="1"/>
</dbReference>
<dbReference type="PANTHER" id="PTHR20371">
    <property type="entry name" value="ENOLASE-PHOSPHATASE E1"/>
    <property type="match status" value="1"/>
</dbReference>
<dbReference type="PANTHER" id="PTHR20371:SF1">
    <property type="entry name" value="ENOLASE-PHOSPHATASE E1"/>
    <property type="match status" value="1"/>
</dbReference>
<dbReference type="Pfam" id="PF00702">
    <property type="entry name" value="Hydrolase"/>
    <property type="match status" value="1"/>
</dbReference>
<dbReference type="PRINTS" id="PR00413">
    <property type="entry name" value="HADHALOGNASE"/>
</dbReference>
<dbReference type="SFLD" id="SFLDF00044">
    <property type="entry name" value="enolase-phosphatase"/>
    <property type="match status" value="1"/>
</dbReference>
<dbReference type="SFLD" id="SFLDS00003">
    <property type="entry name" value="Haloacid_Dehalogenase"/>
    <property type="match status" value="1"/>
</dbReference>
<dbReference type="SUPFAM" id="SSF56784">
    <property type="entry name" value="HAD-like"/>
    <property type="match status" value="1"/>
</dbReference>
<protein>
    <recommendedName>
        <fullName evidence="1">Enolase-phosphatase E1</fullName>
        <ecNumber evidence="1">3.1.3.77</ecNumber>
    </recommendedName>
    <alternativeName>
        <fullName evidence="1">2,3-diketo-5-methylthio-1-phosphopentane phosphatase</fullName>
    </alternativeName>
</protein>
<keyword id="KW-0028">Amino-acid biosynthesis</keyword>
<keyword id="KW-0378">Hydrolase</keyword>
<keyword id="KW-0460">Magnesium</keyword>
<keyword id="KW-0479">Metal-binding</keyword>
<keyword id="KW-0486">Methionine biosynthesis</keyword>
<keyword id="KW-1185">Reference proteome</keyword>
<reference key="1">
    <citation type="journal article" date="2004" name="Proc. Natl. Acad. Sci. U.S.A.">
        <title>Genome sequence of the enterobacterial phytopathogen Erwinia carotovora subsp. atroseptica and characterization of virulence factors.</title>
        <authorList>
            <person name="Bell K.S."/>
            <person name="Sebaihia M."/>
            <person name="Pritchard L."/>
            <person name="Holden M.T.G."/>
            <person name="Hyman L.J."/>
            <person name="Holeva M.C."/>
            <person name="Thomson N.R."/>
            <person name="Bentley S.D."/>
            <person name="Churcher L.J.C."/>
            <person name="Mungall K."/>
            <person name="Atkin R."/>
            <person name="Bason N."/>
            <person name="Brooks K."/>
            <person name="Chillingworth T."/>
            <person name="Clark K."/>
            <person name="Doggett J."/>
            <person name="Fraser A."/>
            <person name="Hance Z."/>
            <person name="Hauser H."/>
            <person name="Jagels K."/>
            <person name="Moule S."/>
            <person name="Norbertczak H."/>
            <person name="Ormond D."/>
            <person name="Price C."/>
            <person name="Quail M.A."/>
            <person name="Sanders M."/>
            <person name="Walker D."/>
            <person name="Whitehead S."/>
            <person name="Salmond G.P.C."/>
            <person name="Birch P.R.J."/>
            <person name="Parkhill J."/>
            <person name="Toth I.K."/>
        </authorList>
    </citation>
    <scope>NUCLEOTIDE SEQUENCE [LARGE SCALE GENOMIC DNA]</scope>
    <source>
        <strain>SCRI 1043 / ATCC BAA-672</strain>
    </source>
</reference>
<name>MTNC_PECAS</name>
<accession>Q6D1G2</accession>
<feature type="chain" id="PRO_0000357364" description="Enolase-phosphatase E1">
    <location>
        <begin position="1"/>
        <end position="229"/>
    </location>
</feature>
<proteinExistence type="inferred from homology"/>